<sequence length="447" mass="49804">MQHFEVNYDGLVGPTHNYAGLSFGNVASLANAKATSSPKHAALQGLKKMKALHDMGMKQGVLAPQERPDIFALRRLGFHGTDSEVLYRAATEAPAIFQAVCSASSMWTANAATVSPSADTANGKVHFTPANLTNKFHRSLEPQTSGRILQAMFNNGRYFEHHTHLPDNEHFGDEGAANHTRLCREYGHAGIELFVFGRYAFDSSKPAPKRFPARQTLEASQAIARLHGLSEDNTVYIQQNPDVIDQGVFHNDVIAVGNQNVLFYHEQAFTDTESKLAEIQRKFGEHPLHFIKVATEQVSIQDAVNTYLFNTQLITPPDGQMTIIAPTECQENDNVRSYLEQLTQSADSPIKRVEYFDVKQSMRNGGGPACLRLRVALNDEEIAGANQNCLMSDGLFNRLNQWVEKHYRDELAVDDLRDPALLEESRTALDELTQIMKLGSVYPFQQD</sequence>
<evidence type="ECO:0000255" key="1">
    <source>
        <dbReference type="HAMAP-Rule" id="MF_01172"/>
    </source>
</evidence>
<evidence type="ECO:0000305" key="2"/>
<feature type="chain" id="PRO_0000262354" description="N-succinylarginine dihydrolase">
    <location>
        <begin position="1"/>
        <end position="447"/>
    </location>
</feature>
<feature type="active site" evidence="1">
    <location>
        <position position="174"/>
    </location>
</feature>
<feature type="active site" evidence="1">
    <location>
        <position position="250"/>
    </location>
</feature>
<feature type="active site" description="Nucleophile" evidence="1">
    <location>
        <position position="370"/>
    </location>
</feature>
<feature type="binding site" evidence="1">
    <location>
        <begin position="19"/>
        <end position="28"/>
    </location>
    <ligand>
        <name>substrate</name>
    </ligand>
</feature>
<feature type="binding site" evidence="1">
    <location>
        <position position="110"/>
    </location>
    <ligand>
        <name>substrate</name>
    </ligand>
</feature>
<feature type="binding site" evidence="1">
    <location>
        <begin position="137"/>
        <end position="138"/>
    </location>
    <ligand>
        <name>substrate</name>
    </ligand>
</feature>
<feature type="binding site" evidence="1">
    <location>
        <position position="214"/>
    </location>
    <ligand>
        <name>substrate</name>
    </ligand>
</feature>
<feature type="binding site" evidence="1">
    <location>
        <position position="252"/>
    </location>
    <ligand>
        <name>substrate</name>
    </ligand>
</feature>
<feature type="binding site" evidence="1">
    <location>
        <position position="364"/>
    </location>
    <ligand>
        <name>substrate</name>
    </ligand>
</feature>
<name>ASTB_IDILO</name>
<comment type="function">
    <text evidence="1">Catalyzes the hydrolysis of N(2)-succinylarginine into N(2)-succinylornithine, ammonia and CO(2).</text>
</comment>
<comment type="catalytic activity">
    <reaction evidence="1">
        <text>N(2)-succinyl-L-arginine + 2 H2O + 2 H(+) = N(2)-succinyl-L-ornithine + 2 NH4(+) + CO2</text>
        <dbReference type="Rhea" id="RHEA:19533"/>
        <dbReference type="ChEBI" id="CHEBI:15377"/>
        <dbReference type="ChEBI" id="CHEBI:15378"/>
        <dbReference type="ChEBI" id="CHEBI:16526"/>
        <dbReference type="ChEBI" id="CHEBI:28938"/>
        <dbReference type="ChEBI" id="CHEBI:58241"/>
        <dbReference type="ChEBI" id="CHEBI:58514"/>
        <dbReference type="EC" id="3.5.3.23"/>
    </reaction>
</comment>
<comment type="pathway">
    <text evidence="1">Amino-acid degradation; L-arginine degradation via AST pathway; L-glutamate and succinate from L-arginine: step 2/5.</text>
</comment>
<comment type="subunit">
    <text evidence="1">Homodimer.</text>
</comment>
<comment type="similarity">
    <text evidence="1">Belongs to the succinylarginine dihydrolase family.</text>
</comment>
<comment type="sequence caution" evidence="2">
    <conflict type="erroneous initiation">
        <sequence resource="EMBL-CDS" id="AAV81851"/>
    </conflict>
</comment>
<gene>
    <name evidence="1" type="primary">astB</name>
    <name type="ordered locus">IL1011</name>
</gene>
<proteinExistence type="inferred from homology"/>
<keyword id="KW-0056">Arginine metabolism</keyword>
<keyword id="KW-0378">Hydrolase</keyword>
<keyword id="KW-1185">Reference proteome</keyword>
<reference key="1">
    <citation type="journal article" date="2004" name="Proc. Natl. Acad. Sci. U.S.A.">
        <title>Genome sequence of the deep-sea gamma-proteobacterium Idiomarina loihiensis reveals amino acid fermentation as a source of carbon and energy.</title>
        <authorList>
            <person name="Hou S."/>
            <person name="Saw J.H."/>
            <person name="Lee K.S."/>
            <person name="Freitas T.A."/>
            <person name="Belisle C."/>
            <person name="Kawarabayasi Y."/>
            <person name="Donachie S.P."/>
            <person name="Pikina A."/>
            <person name="Galperin M.Y."/>
            <person name="Koonin E.V."/>
            <person name="Makarova K.S."/>
            <person name="Omelchenko M.V."/>
            <person name="Sorokin A."/>
            <person name="Wolf Y.I."/>
            <person name="Li Q.X."/>
            <person name="Keum Y.S."/>
            <person name="Campbell S."/>
            <person name="Denery J."/>
            <person name="Aizawa S."/>
            <person name="Shibata S."/>
            <person name="Malahoff A."/>
            <person name="Alam M."/>
        </authorList>
    </citation>
    <scope>NUCLEOTIDE SEQUENCE [LARGE SCALE GENOMIC DNA]</scope>
    <source>
        <strain>ATCC BAA-735 / DSM 15497 / L2-TR</strain>
    </source>
</reference>
<protein>
    <recommendedName>
        <fullName evidence="1">N-succinylarginine dihydrolase</fullName>
        <ecNumber evidence="1">3.5.3.23</ecNumber>
    </recommendedName>
</protein>
<dbReference type="EC" id="3.5.3.23" evidence="1"/>
<dbReference type="EMBL" id="AE017340">
    <property type="protein sequence ID" value="AAV81851.1"/>
    <property type="status" value="ALT_INIT"/>
    <property type="molecule type" value="Genomic_DNA"/>
</dbReference>
<dbReference type="RefSeq" id="WP_011234262.1">
    <property type="nucleotide sequence ID" value="NC_006512.1"/>
</dbReference>
<dbReference type="SMR" id="Q5QWI1"/>
<dbReference type="STRING" id="283942.IL1011"/>
<dbReference type="GeneID" id="41336177"/>
<dbReference type="KEGG" id="ilo:IL1011"/>
<dbReference type="eggNOG" id="COG3724">
    <property type="taxonomic scope" value="Bacteria"/>
</dbReference>
<dbReference type="HOGENOM" id="CLU_053835_0_0_6"/>
<dbReference type="OrthoDB" id="248552at2"/>
<dbReference type="UniPathway" id="UPA00185">
    <property type="reaction ID" value="UER00280"/>
</dbReference>
<dbReference type="Proteomes" id="UP000001171">
    <property type="component" value="Chromosome"/>
</dbReference>
<dbReference type="GO" id="GO:0009015">
    <property type="term" value="F:N-succinylarginine dihydrolase activity"/>
    <property type="evidence" value="ECO:0007669"/>
    <property type="project" value="UniProtKB-UniRule"/>
</dbReference>
<dbReference type="GO" id="GO:0019544">
    <property type="term" value="P:arginine catabolic process to glutamate"/>
    <property type="evidence" value="ECO:0007669"/>
    <property type="project" value="UniProtKB-UniRule"/>
</dbReference>
<dbReference type="GO" id="GO:0019545">
    <property type="term" value="P:arginine catabolic process to succinate"/>
    <property type="evidence" value="ECO:0007669"/>
    <property type="project" value="UniProtKB-UniRule"/>
</dbReference>
<dbReference type="Gene3D" id="3.75.10.20">
    <property type="entry name" value="Succinylarginine dihydrolase"/>
    <property type="match status" value="1"/>
</dbReference>
<dbReference type="HAMAP" id="MF_01172">
    <property type="entry name" value="AstB"/>
    <property type="match status" value="1"/>
</dbReference>
<dbReference type="InterPro" id="IPR037031">
    <property type="entry name" value="AstB_sf"/>
</dbReference>
<dbReference type="InterPro" id="IPR007079">
    <property type="entry name" value="SuccinylArg_d-Hdrlase_AstB"/>
</dbReference>
<dbReference type="NCBIfam" id="TIGR03241">
    <property type="entry name" value="arg_catab_astB"/>
    <property type="match status" value="1"/>
</dbReference>
<dbReference type="NCBIfam" id="NF009789">
    <property type="entry name" value="PRK13281.1"/>
    <property type="match status" value="1"/>
</dbReference>
<dbReference type="PANTHER" id="PTHR30420">
    <property type="entry name" value="N-SUCCINYLARGININE DIHYDROLASE"/>
    <property type="match status" value="1"/>
</dbReference>
<dbReference type="PANTHER" id="PTHR30420:SF2">
    <property type="entry name" value="N-SUCCINYLARGININE DIHYDROLASE"/>
    <property type="match status" value="1"/>
</dbReference>
<dbReference type="Pfam" id="PF04996">
    <property type="entry name" value="AstB"/>
    <property type="match status" value="1"/>
</dbReference>
<dbReference type="SUPFAM" id="SSF55909">
    <property type="entry name" value="Pentein"/>
    <property type="match status" value="1"/>
</dbReference>
<accession>Q5QWI1</accession>
<organism>
    <name type="scientific">Idiomarina loihiensis (strain ATCC BAA-735 / DSM 15497 / L2-TR)</name>
    <dbReference type="NCBI Taxonomy" id="283942"/>
    <lineage>
        <taxon>Bacteria</taxon>
        <taxon>Pseudomonadati</taxon>
        <taxon>Pseudomonadota</taxon>
        <taxon>Gammaproteobacteria</taxon>
        <taxon>Alteromonadales</taxon>
        <taxon>Idiomarinaceae</taxon>
        <taxon>Idiomarina</taxon>
    </lineage>
</organism>